<feature type="chain" id="PRO_1000126388" description="Small ribosomal subunit protein bS20">
    <location>
        <begin position="1"/>
        <end position="91"/>
    </location>
</feature>
<organism>
    <name type="scientific">Acidithiobacillus ferrooxidans (strain ATCC 53993 / BNL-5-31)</name>
    <name type="common">Leptospirillum ferrooxidans (ATCC 53993)</name>
    <dbReference type="NCBI Taxonomy" id="380394"/>
    <lineage>
        <taxon>Bacteria</taxon>
        <taxon>Pseudomonadati</taxon>
        <taxon>Pseudomonadota</taxon>
        <taxon>Acidithiobacillia</taxon>
        <taxon>Acidithiobacillales</taxon>
        <taxon>Acidithiobacillaceae</taxon>
        <taxon>Acidithiobacillus</taxon>
    </lineage>
</organism>
<name>RS20_ACIF5</name>
<proteinExistence type="inferred from homology"/>
<gene>
    <name evidence="1" type="primary">rpsT</name>
    <name type="ordered locus">Lferr_1846</name>
</gene>
<accession>B5EKY1</accession>
<protein>
    <recommendedName>
        <fullName evidence="1">Small ribosomal subunit protein bS20</fullName>
    </recommendedName>
    <alternativeName>
        <fullName evidence="2">30S ribosomal protein S20</fullName>
    </alternativeName>
</protein>
<evidence type="ECO:0000255" key="1">
    <source>
        <dbReference type="HAMAP-Rule" id="MF_00500"/>
    </source>
</evidence>
<evidence type="ECO:0000305" key="2"/>
<dbReference type="EMBL" id="CP001132">
    <property type="protein sequence ID" value="ACH84067.1"/>
    <property type="molecule type" value="Genomic_DNA"/>
</dbReference>
<dbReference type="RefSeq" id="WP_009567470.1">
    <property type="nucleotide sequence ID" value="NC_011206.1"/>
</dbReference>
<dbReference type="SMR" id="B5EKY1"/>
<dbReference type="GeneID" id="65281308"/>
<dbReference type="KEGG" id="afe:Lferr_1846"/>
<dbReference type="eggNOG" id="COG0268">
    <property type="taxonomic scope" value="Bacteria"/>
</dbReference>
<dbReference type="HOGENOM" id="CLU_160655_4_0_6"/>
<dbReference type="GO" id="GO:0005829">
    <property type="term" value="C:cytosol"/>
    <property type="evidence" value="ECO:0007669"/>
    <property type="project" value="TreeGrafter"/>
</dbReference>
<dbReference type="GO" id="GO:0015935">
    <property type="term" value="C:small ribosomal subunit"/>
    <property type="evidence" value="ECO:0007669"/>
    <property type="project" value="TreeGrafter"/>
</dbReference>
<dbReference type="GO" id="GO:0070181">
    <property type="term" value="F:small ribosomal subunit rRNA binding"/>
    <property type="evidence" value="ECO:0007669"/>
    <property type="project" value="TreeGrafter"/>
</dbReference>
<dbReference type="GO" id="GO:0003735">
    <property type="term" value="F:structural constituent of ribosome"/>
    <property type="evidence" value="ECO:0007669"/>
    <property type="project" value="InterPro"/>
</dbReference>
<dbReference type="GO" id="GO:0006412">
    <property type="term" value="P:translation"/>
    <property type="evidence" value="ECO:0007669"/>
    <property type="project" value="UniProtKB-UniRule"/>
</dbReference>
<dbReference type="FunFam" id="1.20.58.110:FF:000001">
    <property type="entry name" value="30S ribosomal protein S20"/>
    <property type="match status" value="1"/>
</dbReference>
<dbReference type="Gene3D" id="1.20.58.110">
    <property type="entry name" value="Ribosomal protein S20"/>
    <property type="match status" value="1"/>
</dbReference>
<dbReference type="HAMAP" id="MF_00500">
    <property type="entry name" value="Ribosomal_bS20"/>
    <property type="match status" value="1"/>
</dbReference>
<dbReference type="InterPro" id="IPR002583">
    <property type="entry name" value="Ribosomal_bS20"/>
</dbReference>
<dbReference type="InterPro" id="IPR036510">
    <property type="entry name" value="Ribosomal_bS20_sf"/>
</dbReference>
<dbReference type="NCBIfam" id="TIGR00029">
    <property type="entry name" value="S20"/>
    <property type="match status" value="1"/>
</dbReference>
<dbReference type="PANTHER" id="PTHR33398">
    <property type="entry name" value="30S RIBOSOMAL PROTEIN S20"/>
    <property type="match status" value="1"/>
</dbReference>
<dbReference type="PANTHER" id="PTHR33398:SF1">
    <property type="entry name" value="SMALL RIBOSOMAL SUBUNIT PROTEIN BS20C"/>
    <property type="match status" value="1"/>
</dbReference>
<dbReference type="Pfam" id="PF01649">
    <property type="entry name" value="Ribosomal_S20p"/>
    <property type="match status" value="1"/>
</dbReference>
<dbReference type="SUPFAM" id="SSF46992">
    <property type="entry name" value="Ribosomal protein S20"/>
    <property type="match status" value="1"/>
</dbReference>
<comment type="function">
    <text evidence="1">Binds directly to 16S ribosomal RNA.</text>
</comment>
<comment type="similarity">
    <text evidence="1">Belongs to the bacterial ribosomal protein bS20 family.</text>
</comment>
<sequence>MANTAQARKRVLQNEKRRLHNASLRSRLRTYVKGVLKAVHVGDQEQARSALRAAESVIDKTVGKGVAHRNMAARTKSRLSARVKAMGNAAQ</sequence>
<keyword id="KW-0687">Ribonucleoprotein</keyword>
<keyword id="KW-0689">Ribosomal protein</keyword>
<keyword id="KW-0694">RNA-binding</keyword>
<keyword id="KW-0699">rRNA-binding</keyword>
<reference key="1">
    <citation type="submission" date="2008-08" db="EMBL/GenBank/DDBJ databases">
        <title>Complete sequence of Acidithiobacillus ferrooxidans ATCC 53993.</title>
        <authorList>
            <person name="Lucas S."/>
            <person name="Copeland A."/>
            <person name="Lapidus A."/>
            <person name="Glavina del Rio T."/>
            <person name="Dalin E."/>
            <person name="Tice H."/>
            <person name="Bruce D."/>
            <person name="Goodwin L."/>
            <person name="Pitluck S."/>
            <person name="Sims D."/>
            <person name="Brettin T."/>
            <person name="Detter J.C."/>
            <person name="Han C."/>
            <person name="Kuske C.R."/>
            <person name="Larimer F."/>
            <person name="Land M."/>
            <person name="Hauser L."/>
            <person name="Kyrpides N."/>
            <person name="Lykidis A."/>
            <person name="Borole A.P."/>
        </authorList>
    </citation>
    <scope>NUCLEOTIDE SEQUENCE [LARGE SCALE GENOMIC DNA]</scope>
    <source>
        <strain>ATCC 53993 / BNL-5-31</strain>
    </source>
</reference>